<name>ZN423_DANRE</name>
<dbReference type="EMBL" id="BX470162">
    <property type="protein sequence ID" value="CAK04518.1"/>
    <property type="molecule type" value="Genomic_DNA"/>
</dbReference>
<dbReference type="EMBL" id="CR387935">
    <property type="protein sequence ID" value="CAK04486.1"/>
    <property type="molecule type" value="Genomic_DNA"/>
</dbReference>
<dbReference type="EMBL" id="BC129184">
    <property type="protein sequence ID" value="AAI29185.1"/>
    <property type="molecule type" value="mRNA"/>
</dbReference>
<dbReference type="RefSeq" id="NP_001073499.1">
    <property type="nucleotide sequence ID" value="NM_001080030.1"/>
</dbReference>
<dbReference type="FunCoup" id="A1L1R6">
    <property type="interactions" value="1332"/>
</dbReference>
<dbReference type="STRING" id="7955.ENSDARP00000156375"/>
<dbReference type="PaxDb" id="7955-ENSDARP00000077731"/>
<dbReference type="PeptideAtlas" id="A1L1R6"/>
<dbReference type="Ensembl" id="ENSDART00000189493">
    <property type="protein sequence ID" value="ENSDARP00000146416"/>
    <property type="gene ID" value="ENSDARG00000059707"/>
</dbReference>
<dbReference type="GeneID" id="566696"/>
<dbReference type="KEGG" id="dre:566696"/>
<dbReference type="AGR" id="ZFIN:ZDB-GENE-030131-4368"/>
<dbReference type="CTD" id="23090"/>
<dbReference type="ZFIN" id="ZDB-GENE-030131-4368">
    <property type="gene designation" value="znf423"/>
</dbReference>
<dbReference type="eggNOG" id="KOG1721">
    <property type="taxonomic scope" value="Eukaryota"/>
</dbReference>
<dbReference type="HOGENOM" id="CLU_004018_0_0_1"/>
<dbReference type="InParanoid" id="A1L1R6"/>
<dbReference type="OrthoDB" id="10014897at2759"/>
<dbReference type="PhylomeDB" id="A1L1R6"/>
<dbReference type="TreeFam" id="TF331504"/>
<dbReference type="PRO" id="PR:A1L1R6"/>
<dbReference type="Proteomes" id="UP000000437">
    <property type="component" value="Alternate scaffold 18"/>
</dbReference>
<dbReference type="Proteomes" id="UP000000437">
    <property type="component" value="Chromosome 18"/>
</dbReference>
<dbReference type="Bgee" id="ENSDARG00000059707">
    <property type="expression patterns" value="Expressed in retina and 20 other cell types or tissues"/>
</dbReference>
<dbReference type="ExpressionAtlas" id="A1L1R6">
    <property type="expression patterns" value="baseline"/>
</dbReference>
<dbReference type="GO" id="GO:0005694">
    <property type="term" value="C:chromosome"/>
    <property type="evidence" value="ECO:0000318"/>
    <property type="project" value="GO_Central"/>
</dbReference>
<dbReference type="GO" id="GO:0005634">
    <property type="term" value="C:nucleus"/>
    <property type="evidence" value="ECO:0007669"/>
    <property type="project" value="UniProtKB-SubCell"/>
</dbReference>
<dbReference type="GO" id="GO:0043035">
    <property type="term" value="F:chromatin insulator sequence binding"/>
    <property type="evidence" value="ECO:0000318"/>
    <property type="project" value="GO_Central"/>
</dbReference>
<dbReference type="GO" id="GO:0008270">
    <property type="term" value="F:zinc ion binding"/>
    <property type="evidence" value="ECO:0007669"/>
    <property type="project" value="UniProtKB-KW"/>
</dbReference>
<dbReference type="GO" id="GO:0030154">
    <property type="term" value="P:cell differentiation"/>
    <property type="evidence" value="ECO:0007669"/>
    <property type="project" value="UniProtKB-KW"/>
</dbReference>
<dbReference type="GO" id="GO:0007399">
    <property type="term" value="P:nervous system development"/>
    <property type="evidence" value="ECO:0007669"/>
    <property type="project" value="UniProtKB-KW"/>
</dbReference>
<dbReference type="GO" id="GO:0006357">
    <property type="term" value="P:regulation of transcription by RNA polymerase II"/>
    <property type="evidence" value="ECO:0000318"/>
    <property type="project" value="GO_Central"/>
</dbReference>
<dbReference type="FunFam" id="3.30.160.60:FF:000468">
    <property type="entry name" value="B-cell lymphoma 6 protein-like"/>
    <property type="match status" value="1"/>
</dbReference>
<dbReference type="FunFam" id="3.30.160.60:FF:001049">
    <property type="entry name" value="zinc finger protein 319"/>
    <property type="match status" value="1"/>
</dbReference>
<dbReference type="FunFam" id="3.30.160.60:FF:000483">
    <property type="entry name" value="Zinc finger protein 423"/>
    <property type="match status" value="1"/>
</dbReference>
<dbReference type="FunFam" id="3.30.160.60:FF:000548">
    <property type="entry name" value="Zinc finger protein 423"/>
    <property type="match status" value="1"/>
</dbReference>
<dbReference type="FunFam" id="3.30.160.60:FF:000760">
    <property type="entry name" value="Zinc finger protein 423"/>
    <property type="match status" value="1"/>
</dbReference>
<dbReference type="FunFam" id="3.30.160.60:FF:004063">
    <property type="entry name" value="Zinc finger protein 423"/>
    <property type="match status" value="1"/>
</dbReference>
<dbReference type="FunFam" id="3.30.160.60:FF:000244">
    <property type="entry name" value="zinc finger protein 423"/>
    <property type="match status" value="1"/>
</dbReference>
<dbReference type="FunFam" id="3.30.160.60:FF:000107">
    <property type="entry name" value="Zinc finger protein 521"/>
    <property type="match status" value="1"/>
</dbReference>
<dbReference type="FunFam" id="3.30.160.60:FF:000143">
    <property type="entry name" value="Zinc finger protein 521"/>
    <property type="match status" value="1"/>
</dbReference>
<dbReference type="FunFam" id="3.30.160.60:FF:000167">
    <property type="entry name" value="Zinc finger protein 521"/>
    <property type="match status" value="1"/>
</dbReference>
<dbReference type="FunFam" id="3.30.160.60:FF:000261">
    <property type="entry name" value="Zinc finger protein 521"/>
    <property type="match status" value="1"/>
</dbReference>
<dbReference type="FunFam" id="3.30.160.60:FF:000326">
    <property type="entry name" value="Zinc finger protein 521"/>
    <property type="match status" value="1"/>
</dbReference>
<dbReference type="Gene3D" id="3.30.160.60">
    <property type="entry name" value="Classic Zinc Finger"/>
    <property type="match status" value="14"/>
</dbReference>
<dbReference type="InterPro" id="IPR036236">
    <property type="entry name" value="Znf_C2H2_sf"/>
</dbReference>
<dbReference type="InterPro" id="IPR013087">
    <property type="entry name" value="Znf_C2H2_type"/>
</dbReference>
<dbReference type="PANTHER" id="PTHR24379:SF128">
    <property type="entry name" value="C2H2-TYPE DOMAIN-CONTAINING PROTEIN"/>
    <property type="match status" value="1"/>
</dbReference>
<dbReference type="PANTHER" id="PTHR24379">
    <property type="entry name" value="KRAB AND ZINC FINGER DOMAIN-CONTAINING"/>
    <property type="match status" value="1"/>
</dbReference>
<dbReference type="Pfam" id="PF00096">
    <property type="entry name" value="zf-C2H2"/>
    <property type="match status" value="6"/>
</dbReference>
<dbReference type="Pfam" id="PF13912">
    <property type="entry name" value="zf-C2H2_6"/>
    <property type="match status" value="3"/>
</dbReference>
<dbReference type="SMART" id="SM00355">
    <property type="entry name" value="ZnF_C2H2"/>
    <property type="match status" value="30"/>
</dbReference>
<dbReference type="SUPFAM" id="SSF57667">
    <property type="entry name" value="beta-beta-alpha zinc fingers"/>
    <property type="match status" value="10"/>
</dbReference>
<dbReference type="PROSITE" id="PS00028">
    <property type="entry name" value="ZINC_FINGER_C2H2_1"/>
    <property type="match status" value="27"/>
</dbReference>
<dbReference type="PROSITE" id="PS50157">
    <property type="entry name" value="ZINC_FINGER_C2H2_2"/>
    <property type="match status" value="23"/>
</dbReference>
<protein>
    <recommendedName>
        <fullName>Zinc finger protein 423</fullName>
    </recommendedName>
</protein>
<comment type="function">
    <text evidence="1">Transcription factor that can both act as an activator or a repressor depending on the context. Plays a central role in BMP signaling and olfactory neurogenesis. Associates with SMADs in response to bmp2 leading to activate transcription of BMP target genes. Acts as a transcriptional repressor involved in terminal olfactory receptor neurons differentiation. Involved in olfactory neurogenesis by participating in a developmental switch that regulates the transition from differentiation to maturation in olfactory receptor neurons (By similarity).</text>
</comment>
<comment type="subcellular location">
    <subcellularLocation>
        <location evidence="1">Nucleus</location>
    </subcellularLocation>
</comment>
<comment type="similarity">
    <text evidence="4">Belongs to the krueppel C2H2-type zinc-finger protein family.</text>
</comment>
<accession>A1L1R6</accession>
<accession>Q1L943</accession>
<accession>Q1LX66</accession>
<proteinExistence type="evidence at transcript level"/>
<feature type="chain" id="PRO_0000308598" description="Zinc finger protein 423">
    <location>
        <begin position="1"/>
        <end position="1365"/>
    </location>
</feature>
<feature type="zinc finger region" description="C2H2-type 1" evidence="2">
    <location>
        <begin position="76"/>
        <end position="98"/>
    </location>
</feature>
<feature type="zinc finger region" description="C2H2-type 2" evidence="2">
    <location>
        <begin position="150"/>
        <end position="172"/>
    </location>
</feature>
<feature type="zinc finger region" description="C2H2-type 3" evidence="2">
    <location>
        <begin position="178"/>
        <end position="200"/>
    </location>
</feature>
<feature type="zinc finger region" description="C2H2-type 4" evidence="2">
    <location>
        <begin position="206"/>
        <end position="228"/>
    </location>
</feature>
<feature type="zinc finger region" description="C2H2-type 5" evidence="2">
    <location>
        <begin position="234"/>
        <end position="256"/>
    </location>
</feature>
<feature type="zinc finger region" description="C2H2-type 6" evidence="2">
    <location>
        <begin position="286"/>
        <end position="309"/>
    </location>
</feature>
<feature type="zinc finger region" description="C2H2-type 7" evidence="2">
    <location>
        <begin position="318"/>
        <end position="341"/>
    </location>
</feature>
<feature type="zinc finger region" description="C2H2-type 8" evidence="2">
    <location>
        <begin position="346"/>
        <end position="368"/>
    </location>
</feature>
<feature type="zinc finger region" description="C2H2-type 9; degenerate" evidence="2">
    <location>
        <begin position="437"/>
        <end position="461"/>
    </location>
</feature>
<feature type="zinc finger region" description="C2H2-type 10" evidence="2">
    <location>
        <begin position="469"/>
        <end position="492"/>
    </location>
</feature>
<feature type="zinc finger region" description="C2H2-type 11" evidence="2">
    <location>
        <begin position="513"/>
        <end position="536"/>
    </location>
</feature>
<feature type="zinc finger region" description="C2H2-type 12" evidence="2">
    <location>
        <begin position="555"/>
        <end position="578"/>
    </location>
</feature>
<feature type="zinc finger region" description="C2H2-type 13; atypical" evidence="2">
    <location>
        <begin position="603"/>
        <end position="628"/>
    </location>
</feature>
<feature type="zinc finger region" description="C2H2-type 14" evidence="2">
    <location>
        <begin position="675"/>
        <end position="697"/>
    </location>
</feature>
<feature type="zinc finger region" description="C2H2-type 15" evidence="2">
    <location>
        <begin position="705"/>
        <end position="728"/>
    </location>
</feature>
<feature type="zinc finger region" description="C2H2-type 16" evidence="2">
    <location>
        <begin position="736"/>
        <end position="759"/>
    </location>
</feature>
<feature type="zinc finger region" description="C2H2-type 17" evidence="2">
    <location>
        <begin position="764"/>
        <end position="787"/>
    </location>
</feature>
<feature type="zinc finger region" description="C2H2-type 18" evidence="2">
    <location>
        <begin position="794"/>
        <end position="817"/>
    </location>
</feature>
<feature type="zinc finger region" description="C2H2-type 19" evidence="2">
    <location>
        <begin position="831"/>
        <end position="853"/>
    </location>
</feature>
<feature type="zinc finger region" description="C2H2-type 20" evidence="2">
    <location>
        <begin position="857"/>
        <end position="880"/>
    </location>
</feature>
<feature type="zinc finger region" description="C2H2-type 21; degenerate" evidence="2">
    <location>
        <begin position="954"/>
        <end position="976"/>
    </location>
</feature>
<feature type="zinc finger region" description="C2H2-type 22" evidence="2">
    <location>
        <begin position="1000"/>
        <end position="1022"/>
    </location>
</feature>
<feature type="zinc finger region" description="C2H2-type 23" evidence="2">
    <location>
        <begin position="1029"/>
        <end position="1051"/>
    </location>
</feature>
<feature type="zinc finger region" description="C2H2-type 24" evidence="2">
    <location>
        <begin position="1090"/>
        <end position="1112"/>
    </location>
</feature>
<feature type="zinc finger region" description="C2H2-type 25" evidence="2">
    <location>
        <begin position="1201"/>
        <end position="1224"/>
    </location>
</feature>
<feature type="zinc finger region" description="C2H2-type 26" evidence="2">
    <location>
        <begin position="1249"/>
        <end position="1271"/>
    </location>
</feature>
<feature type="zinc finger region" description="C2H2-type 27" evidence="2">
    <location>
        <begin position="1279"/>
        <end position="1301"/>
    </location>
</feature>
<feature type="zinc finger region" description="C2H2-type 28" evidence="2">
    <location>
        <begin position="1310"/>
        <end position="1333"/>
    </location>
</feature>
<feature type="zinc finger region" description="C2H2-type 29" evidence="2">
    <location>
        <begin position="1340"/>
        <end position="1363"/>
    </location>
</feature>
<feature type="region of interest" description="Disordered" evidence="3">
    <location>
        <begin position="1"/>
        <end position="69"/>
    </location>
</feature>
<feature type="region of interest" description="Disordered" evidence="3">
    <location>
        <begin position="99"/>
        <end position="126"/>
    </location>
</feature>
<feature type="region of interest" description="Disordered" evidence="3">
    <location>
        <begin position="250"/>
        <end position="280"/>
    </location>
</feature>
<feature type="region of interest" description="Disordered" evidence="3">
    <location>
        <begin position="366"/>
        <end position="429"/>
    </location>
</feature>
<feature type="region of interest" description="Disordered" evidence="3">
    <location>
        <begin position="885"/>
        <end position="916"/>
    </location>
</feature>
<feature type="compositionally biased region" description="Basic residues" evidence="3">
    <location>
        <begin position="1"/>
        <end position="11"/>
    </location>
</feature>
<feature type="compositionally biased region" description="Basic and acidic residues" evidence="3">
    <location>
        <begin position="37"/>
        <end position="51"/>
    </location>
</feature>
<feature type="compositionally biased region" description="Low complexity" evidence="3">
    <location>
        <begin position="112"/>
        <end position="126"/>
    </location>
</feature>
<feature type="compositionally biased region" description="Basic and acidic residues" evidence="3">
    <location>
        <begin position="261"/>
        <end position="274"/>
    </location>
</feature>
<feature type="compositionally biased region" description="Low complexity" evidence="3">
    <location>
        <begin position="386"/>
        <end position="400"/>
    </location>
</feature>
<feature type="compositionally biased region" description="Gly residues" evidence="3">
    <location>
        <begin position="885"/>
        <end position="895"/>
    </location>
</feature>
<feature type="compositionally biased region" description="Polar residues" evidence="3">
    <location>
        <begin position="902"/>
        <end position="913"/>
    </location>
</feature>
<organism>
    <name type="scientific">Danio rerio</name>
    <name type="common">Zebrafish</name>
    <name type="synonym">Brachydanio rerio</name>
    <dbReference type="NCBI Taxonomy" id="7955"/>
    <lineage>
        <taxon>Eukaryota</taxon>
        <taxon>Metazoa</taxon>
        <taxon>Chordata</taxon>
        <taxon>Craniata</taxon>
        <taxon>Vertebrata</taxon>
        <taxon>Euteleostomi</taxon>
        <taxon>Actinopterygii</taxon>
        <taxon>Neopterygii</taxon>
        <taxon>Teleostei</taxon>
        <taxon>Ostariophysi</taxon>
        <taxon>Cypriniformes</taxon>
        <taxon>Danionidae</taxon>
        <taxon>Danioninae</taxon>
        <taxon>Danio</taxon>
    </lineage>
</organism>
<sequence>MSRRKQAKPRSVKAVEEAESTECASGWDSSVQTDAAVSERDSDRKESRAVGEDGEQSVTSHDERVGEEDLDDDSIFTCDNCQQDFECLADLTEHRTNHCPADGDDDPGLSWVASSPSSKDVASPSQMLGDGCCDMGMGTGEEEGGSGLPYPCQFCDKSFSRLSYLKRHEQIHSDKLPFKCTFCSRLFKHKRSRDRHVKLHTGDKKYSCQECEAAFSRSDHLKIHLKTHSSSKPFKCSICKRGFSSTSSLQSHMQAHRKNKEHLAKKDQGKRDGSSSDVTEQDQDLYMCDYCEETFSQTDELEKHVLTQHPQLSDRAELQCIHCPEIFSDEGTLLTHIDRTHANKKHKCPMCAEQFPSVEDVYCHLDSHRQPDSSNHSASPDPVLGSVASMSSATPDSSASLERGSTPDSTLKPGQSRRKLAPSSDHDDGTWSGKVTYSCPYCSKRDFNSLAVLEIHLKTIHADKPQQSHTCQLCLETLPTLYNLNEHVRKAHRSSGNSASNFPLLQFSNVSAFHCNYCPDMFADINSLQEHIRVSHCLSGGVVAGSTTLEGNHAFFCNQCSMGFLTESSLTEHIQQTHCSSVGGVTKMESPVLQPSQSFMEVYSCPYCTNSPIFGSLLKLTKHIKENHKNIPLANNKRKVKVADLSPASSDVEISSPKRHRVTGDSTPAVANGDYPCNQCDLRFSSFEGFQAHLKSHLELLLRRQSCPQCNKEDFDSQEALLQHLTIHYTTTSTQYVCESCDKQFSSVDDLQKHLLDMHTFVLYHCTLCQEVFDSKVSIQVHLAVKHSNEKKMYRCTACAWDFRKESDLQLHVKHSHLGHPASTGAPGKARKCIFCGETFGTEVELQCHITTHSKKYNCRLCGKAFHAIVLLERHLREKHCIFDGGNGNGNGGSQNGTPNGVTQSSKRSTAGSTAAAEQADLQNMLLKGGSQETANSHEASGGEEELDASEPMYACDICGAAYTMESLLQNHRLRDHNIRPGEDDAGSRKKKADFIKGNHKCNVCSRTFFSENGLREHAQTHRGPAKHYMCPICGERFPSLLTLTEHKVTHSKSLDTGTCRICKMPLQSEEEFIEHCQMHPDLRNSLTGFRCVVCMQTVTSTLELKIHGTFHMQKLSSSGGSGGGGGSASSSPNGQLQAHKLYKCALCLKDFKNKQELVKIDVNGLPYGLCAGCMSRGTNGQSPTVVVTPQEAGDKGTTGLRCSECAVKFETLEDLESHIQVDHTEMSPETSGAKKVTDASPVPKKKTYQCIKCQMTFETEREIQIHVANHMIEEGINHECKLCNQMFDSPAKLLCHLIEHSFEGMGGTFKCPVCFTVFVQANKLQQHIFAVHGQEDKIYDCSQCPQKFFFQTELQNHTLSQHAQ</sequence>
<reference key="1">
    <citation type="journal article" date="2013" name="Nature">
        <title>The zebrafish reference genome sequence and its relationship to the human genome.</title>
        <authorList>
            <person name="Howe K."/>
            <person name="Clark M.D."/>
            <person name="Torroja C.F."/>
            <person name="Torrance J."/>
            <person name="Berthelot C."/>
            <person name="Muffato M."/>
            <person name="Collins J.E."/>
            <person name="Humphray S."/>
            <person name="McLaren K."/>
            <person name="Matthews L."/>
            <person name="McLaren S."/>
            <person name="Sealy I."/>
            <person name="Caccamo M."/>
            <person name="Churcher C."/>
            <person name="Scott C."/>
            <person name="Barrett J.C."/>
            <person name="Koch R."/>
            <person name="Rauch G.J."/>
            <person name="White S."/>
            <person name="Chow W."/>
            <person name="Kilian B."/>
            <person name="Quintais L.T."/>
            <person name="Guerra-Assuncao J.A."/>
            <person name="Zhou Y."/>
            <person name="Gu Y."/>
            <person name="Yen J."/>
            <person name="Vogel J.H."/>
            <person name="Eyre T."/>
            <person name="Redmond S."/>
            <person name="Banerjee R."/>
            <person name="Chi J."/>
            <person name="Fu B."/>
            <person name="Langley E."/>
            <person name="Maguire S.F."/>
            <person name="Laird G.K."/>
            <person name="Lloyd D."/>
            <person name="Kenyon E."/>
            <person name="Donaldson S."/>
            <person name="Sehra H."/>
            <person name="Almeida-King J."/>
            <person name="Loveland J."/>
            <person name="Trevanion S."/>
            <person name="Jones M."/>
            <person name="Quail M."/>
            <person name="Willey D."/>
            <person name="Hunt A."/>
            <person name="Burton J."/>
            <person name="Sims S."/>
            <person name="McLay K."/>
            <person name="Plumb B."/>
            <person name="Davis J."/>
            <person name="Clee C."/>
            <person name="Oliver K."/>
            <person name="Clark R."/>
            <person name="Riddle C."/>
            <person name="Elliot D."/>
            <person name="Threadgold G."/>
            <person name="Harden G."/>
            <person name="Ware D."/>
            <person name="Begum S."/>
            <person name="Mortimore B."/>
            <person name="Kerry G."/>
            <person name="Heath P."/>
            <person name="Phillimore B."/>
            <person name="Tracey A."/>
            <person name="Corby N."/>
            <person name="Dunn M."/>
            <person name="Johnson C."/>
            <person name="Wood J."/>
            <person name="Clark S."/>
            <person name="Pelan S."/>
            <person name="Griffiths G."/>
            <person name="Smith M."/>
            <person name="Glithero R."/>
            <person name="Howden P."/>
            <person name="Barker N."/>
            <person name="Lloyd C."/>
            <person name="Stevens C."/>
            <person name="Harley J."/>
            <person name="Holt K."/>
            <person name="Panagiotidis G."/>
            <person name="Lovell J."/>
            <person name="Beasley H."/>
            <person name="Henderson C."/>
            <person name="Gordon D."/>
            <person name="Auger K."/>
            <person name="Wright D."/>
            <person name="Collins J."/>
            <person name="Raisen C."/>
            <person name="Dyer L."/>
            <person name="Leung K."/>
            <person name="Robertson L."/>
            <person name="Ambridge K."/>
            <person name="Leongamornlert D."/>
            <person name="McGuire S."/>
            <person name="Gilderthorp R."/>
            <person name="Griffiths C."/>
            <person name="Manthravadi D."/>
            <person name="Nichol S."/>
            <person name="Barker G."/>
            <person name="Whitehead S."/>
            <person name="Kay M."/>
            <person name="Brown J."/>
            <person name="Murnane C."/>
            <person name="Gray E."/>
            <person name="Humphries M."/>
            <person name="Sycamore N."/>
            <person name="Barker D."/>
            <person name="Saunders D."/>
            <person name="Wallis J."/>
            <person name="Babbage A."/>
            <person name="Hammond S."/>
            <person name="Mashreghi-Mohammadi M."/>
            <person name="Barr L."/>
            <person name="Martin S."/>
            <person name="Wray P."/>
            <person name="Ellington A."/>
            <person name="Matthews N."/>
            <person name="Ellwood M."/>
            <person name="Woodmansey R."/>
            <person name="Clark G."/>
            <person name="Cooper J."/>
            <person name="Tromans A."/>
            <person name="Grafham D."/>
            <person name="Skuce C."/>
            <person name="Pandian R."/>
            <person name="Andrews R."/>
            <person name="Harrison E."/>
            <person name="Kimberley A."/>
            <person name="Garnett J."/>
            <person name="Fosker N."/>
            <person name="Hall R."/>
            <person name="Garner P."/>
            <person name="Kelly D."/>
            <person name="Bird C."/>
            <person name="Palmer S."/>
            <person name="Gehring I."/>
            <person name="Berger A."/>
            <person name="Dooley C.M."/>
            <person name="Ersan-Urun Z."/>
            <person name="Eser C."/>
            <person name="Geiger H."/>
            <person name="Geisler M."/>
            <person name="Karotki L."/>
            <person name="Kirn A."/>
            <person name="Konantz J."/>
            <person name="Konantz M."/>
            <person name="Oberlander M."/>
            <person name="Rudolph-Geiger S."/>
            <person name="Teucke M."/>
            <person name="Lanz C."/>
            <person name="Raddatz G."/>
            <person name="Osoegawa K."/>
            <person name="Zhu B."/>
            <person name="Rapp A."/>
            <person name="Widaa S."/>
            <person name="Langford C."/>
            <person name="Yang F."/>
            <person name="Schuster S.C."/>
            <person name="Carter N.P."/>
            <person name="Harrow J."/>
            <person name="Ning Z."/>
            <person name="Herrero J."/>
            <person name="Searle S.M."/>
            <person name="Enright A."/>
            <person name="Geisler R."/>
            <person name="Plasterk R.H."/>
            <person name="Lee C."/>
            <person name="Westerfield M."/>
            <person name="de Jong P.J."/>
            <person name="Zon L.I."/>
            <person name="Postlethwait J.H."/>
            <person name="Nusslein-Volhard C."/>
            <person name="Hubbard T.J."/>
            <person name="Roest Crollius H."/>
            <person name="Rogers J."/>
            <person name="Stemple D.L."/>
        </authorList>
    </citation>
    <scope>NUCLEOTIDE SEQUENCE [LARGE SCALE GENOMIC DNA]</scope>
    <source>
        <strain>Tuebingen</strain>
    </source>
</reference>
<reference key="2">
    <citation type="submission" date="2006-12" db="EMBL/GenBank/DDBJ databases">
        <authorList>
            <consortium name="NIH - Zebrafish Gene Collection (ZGC) project"/>
        </authorList>
    </citation>
    <scope>NUCLEOTIDE SEQUENCE [LARGE SCALE MRNA]</scope>
    <source>
        <tissue>Embryo</tissue>
    </source>
</reference>
<gene>
    <name type="primary">znf423</name>
    <name type="ORF">si:ch211-216l23.1</name>
    <name type="ORF">zgc:158272</name>
</gene>
<keyword id="KW-0010">Activator</keyword>
<keyword id="KW-0217">Developmental protein</keyword>
<keyword id="KW-0221">Differentiation</keyword>
<keyword id="KW-0238">DNA-binding</keyword>
<keyword id="KW-0479">Metal-binding</keyword>
<keyword id="KW-0524">Neurogenesis</keyword>
<keyword id="KW-0539">Nucleus</keyword>
<keyword id="KW-1185">Reference proteome</keyword>
<keyword id="KW-0677">Repeat</keyword>
<keyword id="KW-0678">Repressor</keyword>
<keyword id="KW-0804">Transcription</keyword>
<keyword id="KW-0805">Transcription regulation</keyword>
<keyword id="KW-0862">Zinc</keyword>
<keyword id="KW-0863">Zinc-finger</keyword>
<evidence type="ECO:0000250" key="1"/>
<evidence type="ECO:0000255" key="2">
    <source>
        <dbReference type="PROSITE-ProRule" id="PRU00042"/>
    </source>
</evidence>
<evidence type="ECO:0000256" key="3">
    <source>
        <dbReference type="SAM" id="MobiDB-lite"/>
    </source>
</evidence>
<evidence type="ECO:0000305" key="4"/>